<gene>
    <name evidence="1" type="primary">atpB</name>
</gene>
<protein>
    <recommendedName>
        <fullName evidence="1">ATP synthase subunit beta, chloroplastic</fullName>
        <ecNumber evidence="1">7.1.2.2</ecNumber>
    </recommendedName>
    <alternativeName>
        <fullName evidence="1">ATP synthase F1 sector subunit beta</fullName>
    </alternativeName>
    <alternativeName>
        <fullName evidence="1">F-ATPase subunit beta</fullName>
    </alternativeName>
</protein>
<accession>Q2MII0</accession>
<keyword id="KW-0066">ATP synthesis</keyword>
<keyword id="KW-0067">ATP-binding</keyword>
<keyword id="KW-0139">CF(1)</keyword>
<keyword id="KW-0150">Chloroplast</keyword>
<keyword id="KW-0375">Hydrogen ion transport</keyword>
<keyword id="KW-0406">Ion transport</keyword>
<keyword id="KW-0472">Membrane</keyword>
<keyword id="KW-0547">Nucleotide-binding</keyword>
<keyword id="KW-0934">Plastid</keyword>
<keyword id="KW-0793">Thylakoid</keyword>
<keyword id="KW-1278">Translocase</keyword>
<keyword id="KW-0813">Transport</keyword>
<name>ATPB_SOLBU</name>
<comment type="function">
    <text evidence="1">Produces ATP from ADP in the presence of a proton gradient across the membrane. The catalytic sites are hosted primarily by the beta subunits.</text>
</comment>
<comment type="catalytic activity">
    <reaction evidence="1">
        <text>ATP + H2O + 4 H(+)(in) = ADP + phosphate + 5 H(+)(out)</text>
        <dbReference type="Rhea" id="RHEA:57720"/>
        <dbReference type="ChEBI" id="CHEBI:15377"/>
        <dbReference type="ChEBI" id="CHEBI:15378"/>
        <dbReference type="ChEBI" id="CHEBI:30616"/>
        <dbReference type="ChEBI" id="CHEBI:43474"/>
        <dbReference type="ChEBI" id="CHEBI:456216"/>
        <dbReference type="EC" id="7.1.2.2"/>
    </reaction>
</comment>
<comment type="subunit">
    <text evidence="1">F-type ATPases have 2 components, CF(1) - the catalytic core - and CF(0) - the membrane proton channel. CF(1) has five subunits: alpha(3), beta(3), gamma(1), delta(1), epsilon(1). CF(0) has four main subunits: a(1), b(1), b'(1) and c(9-12).</text>
</comment>
<comment type="subcellular location">
    <subcellularLocation>
        <location evidence="1">Plastid</location>
        <location evidence="1">Chloroplast thylakoid membrane</location>
        <topology evidence="1">Peripheral membrane protein</topology>
    </subcellularLocation>
</comment>
<comment type="similarity">
    <text evidence="1">Belongs to the ATPase alpha/beta chains family.</text>
</comment>
<organism>
    <name type="scientific">Solanum bulbocastanum</name>
    <name type="common">Wild potato</name>
    <dbReference type="NCBI Taxonomy" id="147425"/>
    <lineage>
        <taxon>Eukaryota</taxon>
        <taxon>Viridiplantae</taxon>
        <taxon>Streptophyta</taxon>
        <taxon>Embryophyta</taxon>
        <taxon>Tracheophyta</taxon>
        <taxon>Spermatophyta</taxon>
        <taxon>Magnoliopsida</taxon>
        <taxon>eudicotyledons</taxon>
        <taxon>Gunneridae</taxon>
        <taxon>Pentapetalae</taxon>
        <taxon>asterids</taxon>
        <taxon>lamiids</taxon>
        <taxon>Solanales</taxon>
        <taxon>Solanaceae</taxon>
        <taxon>Solanoideae</taxon>
        <taxon>Solaneae</taxon>
        <taxon>Solanum</taxon>
    </lineage>
</organism>
<geneLocation type="chloroplast"/>
<proteinExistence type="inferred from homology"/>
<reference key="1">
    <citation type="journal article" date="2006" name="Theor. Appl. Genet.">
        <title>Complete chloroplast genome sequences of Solanum bulbocastanum, Solanum lycopersicum and comparative analyses with other Solanaceae genomes.</title>
        <authorList>
            <person name="Daniell H."/>
            <person name="Lee S.-B."/>
            <person name="Grevich J."/>
            <person name="Saski C."/>
            <person name="Quesada-Vargas T."/>
            <person name="Guda C."/>
            <person name="Tomkins J."/>
            <person name="Jansen R.K."/>
        </authorList>
    </citation>
    <scope>NUCLEOTIDE SEQUENCE [LARGE SCALE GENOMIC DNA]</scope>
    <source>
        <strain>cv. PT29</strain>
    </source>
</reference>
<dbReference type="EC" id="7.1.2.2" evidence="1"/>
<dbReference type="EMBL" id="DQ347958">
    <property type="protein sequence ID" value="ABC56220.1"/>
    <property type="molecule type" value="Genomic_DNA"/>
</dbReference>
<dbReference type="RefSeq" id="YP_538855.1">
    <property type="nucleotide sequence ID" value="NC_007943.1"/>
</dbReference>
<dbReference type="SMR" id="Q2MII0"/>
<dbReference type="GeneID" id="3989431"/>
<dbReference type="GO" id="GO:0009535">
    <property type="term" value="C:chloroplast thylakoid membrane"/>
    <property type="evidence" value="ECO:0007669"/>
    <property type="project" value="UniProtKB-SubCell"/>
</dbReference>
<dbReference type="GO" id="GO:0005739">
    <property type="term" value="C:mitochondrion"/>
    <property type="evidence" value="ECO:0007669"/>
    <property type="project" value="GOC"/>
</dbReference>
<dbReference type="GO" id="GO:0045259">
    <property type="term" value="C:proton-transporting ATP synthase complex"/>
    <property type="evidence" value="ECO:0007669"/>
    <property type="project" value="UniProtKB-KW"/>
</dbReference>
<dbReference type="GO" id="GO:0005524">
    <property type="term" value="F:ATP binding"/>
    <property type="evidence" value="ECO:0007669"/>
    <property type="project" value="UniProtKB-UniRule"/>
</dbReference>
<dbReference type="GO" id="GO:0016887">
    <property type="term" value="F:ATP hydrolysis activity"/>
    <property type="evidence" value="ECO:0007669"/>
    <property type="project" value="InterPro"/>
</dbReference>
<dbReference type="GO" id="GO:0046933">
    <property type="term" value="F:proton-transporting ATP synthase activity, rotational mechanism"/>
    <property type="evidence" value="ECO:0007669"/>
    <property type="project" value="UniProtKB-UniRule"/>
</dbReference>
<dbReference type="GO" id="GO:0042776">
    <property type="term" value="P:proton motive force-driven mitochondrial ATP synthesis"/>
    <property type="evidence" value="ECO:0007669"/>
    <property type="project" value="TreeGrafter"/>
</dbReference>
<dbReference type="CDD" id="cd18110">
    <property type="entry name" value="ATP-synt_F1_beta_C"/>
    <property type="match status" value="1"/>
</dbReference>
<dbReference type="CDD" id="cd18115">
    <property type="entry name" value="ATP-synt_F1_beta_N"/>
    <property type="match status" value="1"/>
</dbReference>
<dbReference type="CDD" id="cd01133">
    <property type="entry name" value="F1-ATPase_beta_CD"/>
    <property type="match status" value="1"/>
</dbReference>
<dbReference type="FunFam" id="1.10.1140.10:FF:000001">
    <property type="entry name" value="ATP synthase subunit beta"/>
    <property type="match status" value="1"/>
</dbReference>
<dbReference type="FunFam" id="3.40.50.300:FF:000004">
    <property type="entry name" value="ATP synthase subunit beta"/>
    <property type="match status" value="1"/>
</dbReference>
<dbReference type="FunFam" id="2.40.10.170:FF:000002">
    <property type="entry name" value="ATP synthase subunit beta, chloroplastic"/>
    <property type="match status" value="1"/>
</dbReference>
<dbReference type="Gene3D" id="2.40.10.170">
    <property type="match status" value="1"/>
</dbReference>
<dbReference type="Gene3D" id="1.10.1140.10">
    <property type="entry name" value="Bovine Mitochondrial F1-atpase, Atp Synthase Beta Chain, Chain D, domain 3"/>
    <property type="match status" value="1"/>
</dbReference>
<dbReference type="Gene3D" id="3.40.50.300">
    <property type="entry name" value="P-loop containing nucleotide triphosphate hydrolases"/>
    <property type="match status" value="1"/>
</dbReference>
<dbReference type="HAMAP" id="MF_01347">
    <property type="entry name" value="ATP_synth_beta_bact"/>
    <property type="match status" value="1"/>
</dbReference>
<dbReference type="InterPro" id="IPR003593">
    <property type="entry name" value="AAA+_ATPase"/>
</dbReference>
<dbReference type="InterPro" id="IPR055190">
    <property type="entry name" value="ATP-synt_VA_C"/>
</dbReference>
<dbReference type="InterPro" id="IPR005722">
    <property type="entry name" value="ATP_synth_F1_bsu"/>
</dbReference>
<dbReference type="InterPro" id="IPR020003">
    <property type="entry name" value="ATPase_a/bsu_AS"/>
</dbReference>
<dbReference type="InterPro" id="IPR050053">
    <property type="entry name" value="ATPase_alpha/beta_chains"/>
</dbReference>
<dbReference type="InterPro" id="IPR004100">
    <property type="entry name" value="ATPase_F1/V1/A1_a/bsu_N"/>
</dbReference>
<dbReference type="InterPro" id="IPR036121">
    <property type="entry name" value="ATPase_F1/V1/A1_a/bsu_N_sf"/>
</dbReference>
<dbReference type="InterPro" id="IPR000194">
    <property type="entry name" value="ATPase_F1/V1/A1_a/bsu_nucl-bd"/>
</dbReference>
<dbReference type="InterPro" id="IPR024034">
    <property type="entry name" value="ATPase_F1/V1_b/a_C"/>
</dbReference>
<dbReference type="InterPro" id="IPR027417">
    <property type="entry name" value="P-loop_NTPase"/>
</dbReference>
<dbReference type="NCBIfam" id="TIGR01039">
    <property type="entry name" value="atpD"/>
    <property type="match status" value="1"/>
</dbReference>
<dbReference type="PANTHER" id="PTHR15184">
    <property type="entry name" value="ATP SYNTHASE"/>
    <property type="match status" value="1"/>
</dbReference>
<dbReference type="PANTHER" id="PTHR15184:SF71">
    <property type="entry name" value="ATP SYNTHASE SUBUNIT BETA, MITOCHONDRIAL"/>
    <property type="match status" value="1"/>
</dbReference>
<dbReference type="Pfam" id="PF00006">
    <property type="entry name" value="ATP-synt_ab"/>
    <property type="match status" value="1"/>
</dbReference>
<dbReference type="Pfam" id="PF02874">
    <property type="entry name" value="ATP-synt_ab_N"/>
    <property type="match status" value="1"/>
</dbReference>
<dbReference type="Pfam" id="PF22919">
    <property type="entry name" value="ATP-synt_VA_C"/>
    <property type="match status" value="1"/>
</dbReference>
<dbReference type="SMART" id="SM00382">
    <property type="entry name" value="AAA"/>
    <property type="match status" value="1"/>
</dbReference>
<dbReference type="SUPFAM" id="SSF47917">
    <property type="entry name" value="C-terminal domain of alpha and beta subunits of F1 ATP synthase"/>
    <property type="match status" value="1"/>
</dbReference>
<dbReference type="SUPFAM" id="SSF50615">
    <property type="entry name" value="N-terminal domain of alpha and beta subunits of F1 ATP synthase"/>
    <property type="match status" value="1"/>
</dbReference>
<dbReference type="SUPFAM" id="SSF52540">
    <property type="entry name" value="P-loop containing nucleoside triphosphate hydrolases"/>
    <property type="match status" value="1"/>
</dbReference>
<dbReference type="PROSITE" id="PS00152">
    <property type="entry name" value="ATPASE_ALPHA_BETA"/>
    <property type="match status" value="1"/>
</dbReference>
<feature type="chain" id="PRO_0000254524" description="ATP synthase subunit beta, chloroplastic">
    <location>
        <begin position="1"/>
        <end position="498"/>
    </location>
</feature>
<feature type="binding site" evidence="1">
    <location>
        <begin position="172"/>
        <end position="179"/>
    </location>
    <ligand>
        <name>ATP</name>
        <dbReference type="ChEBI" id="CHEBI:30616"/>
    </ligand>
</feature>
<evidence type="ECO:0000255" key="1">
    <source>
        <dbReference type="HAMAP-Rule" id="MF_01347"/>
    </source>
</evidence>
<sequence>MRINPTTSGSGVSTLEKKNPGRVVQIIGPVLDVAFPPGKMPNIYNALVVQGRDSVGQPINVACEVQQLLGNNRVRAVAMSATDGLTRGMAVIDTGAPISVPVGGATLGRIFNVLGEPVDNLGPVDTSTTSPIHRSAPAFIQLDTKLSIFETGIKVVDLLAPYRRGGKIGLFGGAGVGKTVLIMELINNIAKAHGGVSVFGGVGERTREGNDLYMEMKESGVINKENIAESKVALVYGQMNEPPGARMRVGLTALTMAEYFRDVNEQDVLLFIDNIFRFVQAGSEVSALLGRMPSAVGYQPTLSTEMGSLQERITSTKDGSITSIQAVYVPADDLTDPAPATTFAHLDATTVLSRGLAAKGIYPAVDPLDSTSTMLQPRIVGEEHYETAQRVKQTLQRYKELQDIIAILGLDELSEEDRLLVARARKIERFLSQPFFVAEVFTGSPGKYVGLAETIRGFQLILSGELDGLPEQAFYLVGTIDEATAKAMNLEMESNLKK</sequence>